<accession>O13186</accession>
<keyword id="KW-0007">Acetylation</keyword>
<keyword id="KW-0156">Chromatin regulator</keyword>
<keyword id="KW-0158">Chromosome</keyword>
<keyword id="KW-0963">Cytoplasm</keyword>
<keyword id="KW-0206">Cytoskeleton</keyword>
<keyword id="KW-0238">DNA-binding</keyword>
<keyword id="KW-1017">Isopeptide bond</keyword>
<keyword id="KW-0446">Lipid-binding</keyword>
<keyword id="KW-0479">Metal-binding</keyword>
<keyword id="KW-0488">Methylation</keyword>
<keyword id="KW-0496">Mitochondrion</keyword>
<keyword id="KW-0539">Nucleus</keyword>
<keyword id="KW-0597">Phosphoprotein</keyword>
<keyword id="KW-0675">Receptor</keyword>
<keyword id="KW-1185">Reference proteome</keyword>
<keyword id="KW-0754">Steroid-binding</keyword>
<keyword id="KW-0804">Transcription</keyword>
<keyword id="KW-0805">Transcription regulation</keyword>
<keyword id="KW-0832">Ubl conjugation</keyword>
<keyword id="KW-0862">Zinc</keyword>
<keyword id="KW-0863">Zinc-finger</keyword>
<reference key="1">
    <citation type="journal article" date="1997" name="J. Clin. Endocrinol. Metab.">
        <title>Cloning and expression of the glucocorticoid receptor from the squirrel monkey (Saimiri boliviensis boliviensis), a glucocorticoid-resistant primate.</title>
        <authorList>
            <person name="Reynolds P.D."/>
            <person name="Pittler S.J."/>
            <person name="Scammell J.G."/>
        </authorList>
    </citation>
    <scope>NUCLEOTIDE SEQUENCE [MRNA]</scope>
    <source>
        <tissue>Liver</tissue>
    </source>
</reference>
<proteinExistence type="evidence at transcript level"/>
<protein>
    <recommendedName>
        <fullName>Glucocorticoid receptor</fullName>
        <shortName>GR</shortName>
    </recommendedName>
    <alternativeName>
        <fullName>Nuclear receptor subfamily 3 group C member 1</fullName>
    </alternativeName>
</protein>
<organism>
    <name type="scientific">Saimiri boliviensis boliviensis</name>
    <name type="common">Bolivian squirrel monkey</name>
    <dbReference type="NCBI Taxonomy" id="39432"/>
    <lineage>
        <taxon>Eukaryota</taxon>
        <taxon>Metazoa</taxon>
        <taxon>Chordata</taxon>
        <taxon>Craniata</taxon>
        <taxon>Vertebrata</taxon>
        <taxon>Euteleostomi</taxon>
        <taxon>Mammalia</taxon>
        <taxon>Eutheria</taxon>
        <taxon>Euarchontoglires</taxon>
        <taxon>Primates</taxon>
        <taxon>Haplorrhini</taxon>
        <taxon>Platyrrhini</taxon>
        <taxon>Cebidae</taxon>
        <taxon>Saimiriinae</taxon>
        <taxon>Saimiri</taxon>
    </lineage>
</organism>
<dbReference type="EMBL" id="U87951">
    <property type="protein sequence ID" value="AAC51131.1"/>
    <property type="molecule type" value="mRNA"/>
</dbReference>
<dbReference type="RefSeq" id="XP_003920603.1">
    <property type="nucleotide sequence ID" value="XM_003920554.3"/>
</dbReference>
<dbReference type="RefSeq" id="XP_039320129.1">
    <property type="nucleotide sequence ID" value="XM_039464195.1"/>
</dbReference>
<dbReference type="SMR" id="O13186"/>
<dbReference type="STRING" id="39432.ENSSBOP00000024367"/>
<dbReference type="Ensembl" id="ENSSBOT00000041227.1">
    <property type="protein sequence ID" value="ENSSBOP00000024367.1"/>
    <property type="gene ID" value="ENSSBOG00000028631.1"/>
</dbReference>
<dbReference type="Ensembl" id="ENSSBOT00000041233.1">
    <property type="protein sequence ID" value="ENSSBOP00000024373.1"/>
    <property type="gene ID" value="ENSSBOG00000028631.1"/>
</dbReference>
<dbReference type="GeneID" id="101043581"/>
<dbReference type="KEGG" id="sbq:101043581"/>
<dbReference type="CTD" id="2908"/>
<dbReference type="GeneTree" id="ENSGT00940000156385"/>
<dbReference type="OMA" id="GLYMGDT"/>
<dbReference type="Proteomes" id="UP000233220">
    <property type="component" value="Unplaced"/>
</dbReference>
<dbReference type="GO" id="GO:0005813">
    <property type="term" value="C:centrosome"/>
    <property type="evidence" value="ECO:0007669"/>
    <property type="project" value="UniProtKB-SubCell"/>
</dbReference>
<dbReference type="GO" id="GO:0005694">
    <property type="term" value="C:chromosome"/>
    <property type="evidence" value="ECO:0007669"/>
    <property type="project" value="UniProtKB-SubCell"/>
</dbReference>
<dbReference type="GO" id="GO:0005737">
    <property type="term" value="C:cytoplasm"/>
    <property type="evidence" value="ECO:0000250"/>
    <property type="project" value="UniProtKB"/>
</dbReference>
<dbReference type="GO" id="GO:0005829">
    <property type="term" value="C:cytosol"/>
    <property type="evidence" value="ECO:0007669"/>
    <property type="project" value="Ensembl"/>
</dbReference>
<dbReference type="GO" id="GO:0016020">
    <property type="term" value="C:membrane"/>
    <property type="evidence" value="ECO:0007669"/>
    <property type="project" value="Ensembl"/>
</dbReference>
<dbReference type="GO" id="GO:0005739">
    <property type="term" value="C:mitochondrion"/>
    <property type="evidence" value="ECO:0007669"/>
    <property type="project" value="UniProtKB-SubCell"/>
</dbReference>
<dbReference type="GO" id="GO:0016607">
    <property type="term" value="C:nuclear speck"/>
    <property type="evidence" value="ECO:0000250"/>
    <property type="project" value="UniProtKB"/>
</dbReference>
<dbReference type="GO" id="GO:0005634">
    <property type="term" value="C:nucleus"/>
    <property type="evidence" value="ECO:0000250"/>
    <property type="project" value="UniProtKB"/>
</dbReference>
<dbReference type="GO" id="GO:0032991">
    <property type="term" value="C:protein-containing complex"/>
    <property type="evidence" value="ECO:0007669"/>
    <property type="project" value="Ensembl"/>
</dbReference>
<dbReference type="GO" id="GO:0005819">
    <property type="term" value="C:spindle"/>
    <property type="evidence" value="ECO:0007669"/>
    <property type="project" value="UniProtKB-SubCell"/>
</dbReference>
<dbReference type="GO" id="GO:0045202">
    <property type="term" value="C:synapse"/>
    <property type="evidence" value="ECO:0007669"/>
    <property type="project" value="GOC"/>
</dbReference>
<dbReference type="GO" id="GO:0001046">
    <property type="term" value="F:core promoter sequence-specific DNA binding"/>
    <property type="evidence" value="ECO:0007669"/>
    <property type="project" value="Ensembl"/>
</dbReference>
<dbReference type="GO" id="GO:0001228">
    <property type="term" value="F:DNA-binding transcription activator activity, RNA polymerase II-specific"/>
    <property type="evidence" value="ECO:0007669"/>
    <property type="project" value="Ensembl"/>
</dbReference>
<dbReference type="GO" id="GO:0003700">
    <property type="term" value="F:DNA-binding transcription factor activity"/>
    <property type="evidence" value="ECO:0000250"/>
    <property type="project" value="UniProtKB"/>
</dbReference>
<dbReference type="GO" id="GO:0001227">
    <property type="term" value="F:DNA-binding transcription repressor activity, RNA polymerase II-specific"/>
    <property type="evidence" value="ECO:0007669"/>
    <property type="project" value="Ensembl"/>
</dbReference>
<dbReference type="GO" id="GO:0051879">
    <property type="term" value="F:Hsp90 protein binding"/>
    <property type="evidence" value="ECO:0007669"/>
    <property type="project" value="Ensembl"/>
</dbReference>
<dbReference type="GO" id="GO:0042802">
    <property type="term" value="F:identical protein binding"/>
    <property type="evidence" value="ECO:0007669"/>
    <property type="project" value="Ensembl"/>
</dbReference>
<dbReference type="GO" id="GO:0004883">
    <property type="term" value="F:nuclear glucocorticoid receptor activity"/>
    <property type="evidence" value="ECO:0007669"/>
    <property type="project" value="Ensembl"/>
</dbReference>
<dbReference type="GO" id="GO:0004879">
    <property type="term" value="F:nuclear receptor activity"/>
    <property type="evidence" value="ECO:0000250"/>
    <property type="project" value="UniProtKB"/>
</dbReference>
<dbReference type="GO" id="GO:1990841">
    <property type="term" value="F:promoter-specific chromatin binding"/>
    <property type="evidence" value="ECO:0007669"/>
    <property type="project" value="Ensembl"/>
</dbReference>
<dbReference type="GO" id="GO:0019901">
    <property type="term" value="F:protein kinase binding"/>
    <property type="evidence" value="ECO:0007669"/>
    <property type="project" value="Ensembl"/>
</dbReference>
<dbReference type="GO" id="GO:0000978">
    <property type="term" value="F:RNA polymerase II cis-regulatory region sequence-specific DNA binding"/>
    <property type="evidence" value="ECO:0007669"/>
    <property type="project" value="Ensembl"/>
</dbReference>
<dbReference type="GO" id="GO:0005496">
    <property type="term" value="F:steroid binding"/>
    <property type="evidence" value="ECO:0000250"/>
    <property type="project" value="UniProtKB"/>
</dbReference>
<dbReference type="GO" id="GO:1990239">
    <property type="term" value="F:steroid hormone binding"/>
    <property type="evidence" value="ECO:0000250"/>
    <property type="project" value="UniProtKB"/>
</dbReference>
<dbReference type="GO" id="GO:0017025">
    <property type="term" value="F:TBP-class protein binding"/>
    <property type="evidence" value="ECO:0007669"/>
    <property type="project" value="Ensembl"/>
</dbReference>
<dbReference type="GO" id="GO:0008270">
    <property type="term" value="F:zinc ion binding"/>
    <property type="evidence" value="ECO:0007669"/>
    <property type="project" value="UniProtKB-KW"/>
</dbReference>
<dbReference type="GO" id="GO:0030325">
    <property type="term" value="P:adrenal gland development"/>
    <property type="evidence" value="ECO:0007669"/>
    <property type="project" value="Ensembl"/>
</dbReference>
<dbReference type="GO" id="GO:0048708">
    <property type="term" value="P:astrocyte differentiation"/>
    <property type="evidence" value="ECO:0007669"/>
    <property type="project" value="Ensembl"/>
</dbReference>
<dbReference type="GO" id="GO:0071549">
    <property type="term" value="P:cellular response to dexamethasone stimulus"/>
    <property type="evidence" value="ECO:0007669"/>
    <property type="project" value="Ensembl"/>
</dbReference>
<dbReference type="GO" id="GO:0071385">
    <property type="term" value="P:cellular response to glucocorticoid stimulus"/>
    <property type="evidence" value="ECO:0000250"/>
    <property type="project" value="UniProtKB"/>
</dbReference>
<dbReference type="GO" id="GO:0071383">
    <property type="term" value="P:cellular response to steroid hormone stimulus"/>
    <property type="evidence" value="ECO:0000250"/>
    <property type="project" value="UniProtKB"/>
</dbReference>
<dbReference type="GO" id="GO:0071560">
    <property type="term" value="P:cellular response to transforming growth factor beta stimulus"/>
    <property type="evidence" value="ECO:0007669"/>
    <property type="project" value="Ensembl"/>
</dbReference>
<dbReference type="GO" id="GO:0006325">
    <property type="term" value="P:chromatin organization"/>
    <property type="evidence" value="ECO:0007669"/>
    <property type="project" value="UniProtKB-KW"/>
</dbReference>
<dbReference type="GO" id="GO:0010467">
    <property type="term" value="P:gene expression"/>
    <property type="evidence" value="ECO:0007669"/>
    <property type="project" value="Ensembl"/>
</dbReference>
<dbReference type="GO" id="GO:0008211">
    <property type="term" value="P:glucocorticoid metabolic process"/>
    <property type="evidence" value="ECO:0007669"/>
    <property type="project" value="Ensembl"/>
</dbReference>
<dbReference type="GO" id="GO:0060603">
    <property type="term" value="P:mammary gland duct morphogenesis"/>
    <property type="evidence" value="ECO:0007669"/>
    <property type="project" value="Ensembl"/>
</dbReference>
<dbReference type="GO" id="GO:0042711">
    <property type="term" value="P:maternal behavior"/>
    <property type="evidence" value="ECO:0007669"/>
    <property type="project" value="Ensembl"/>
</dbReference>
<dbReference type="GO" id="GO:0014004">
    <property type="term" value="P:microglia differentiation"/>
    <property type="evidence" value="ECO:0007669"/>
    <property type="project" value="Ensembl"/>
</dbReference>
<dbReference type="GO" id="GO:0061744">
    <property type="term" value="P:motor behavior"/>
    <property type="evidence" value="ECO:0007669"/>
    <property type="project" value="Ensembl"/>
</dbReference>
<dbReference type="GO" id="GO:0150076">
    <property type="term" value="P:neuroinflammatory response"/>
    <property type="evidence" value="ECO:0007669"/>
    <property type="project" value="Ensembl"/>
</dbReference>
<dbReference type="GO" id="GO:1902895">
    <property type="term" value="P:positive regulation of miRNA transcription"/>
    <property type="evidence" value="ECO:0007669"/>
    <property type="project" value="Ensembl"/>
</dbReference>
<dbReference type="GO" id="GO:0043525">
    <property type="term" value="P:positive regulation of neuron apoptotic process"/>
    <property type="evidence" value="ECO:0007669"/>
    <property type="project" value="Ensembl"/>
</dbReference>
<dbReference type="GO" id="GO:0045944">
    <property type="term" value="P:positive regulation of transcription by RNA polymerase II"/>
    <property type="evidence" value="ECO:0000250"/>
    <property type="project" value="UniProtKB"/>
</dbReference>
<dbReference type="GO" id="GO:0031946">
    <property type="term" value="P:regulation of glucocorticoid biosynthetic process"/>
    <property type="evidence" value="ECO:0007669"/>
    <property type="project" value="Ensembl"/>
</dbReference>
<dbReference type="GO" id="GO:0006111">
    <property type="term" value="P:regulation of gluconeogenesis"/>
    <property type="evidence" value="ECO:0007669"/>
    <property type="project" value="Ensembl"/>
</dbReference>
<dbReference type="GO" id="GO:0051414">
    <property type="term" value="P:response to cortisol"/>
    <property type="evidence" value="ECO:0007669"/>
    <property type="project" value="Ensembl"/>
</dbReference>
<dbReference type="GO" id="GO:0009611">
    <property type="term" value="P:response to wounding"/>
    <property type="evidence" value="ECO:0007669"/>
    <property type="project" value="Ensembl"/>
</dbReference>
<dbReference type="GO" id="GO:0035249">
    <property type="term" value="P:synaptic transmission, glutamatergic"/>
    <property type="evidence" value="ECO:0007669"/>
    <property type="project" value="Ensembl"/>
</dbReference>
<dbReference type="CDD" id="cd07172">
    <property type="entry name" value="NR_DBD_GR_PR"/>
    <property type="match status" value="1"/>
</dbReference>
<dbReference type="CDD" id="cd07076">
    <property type="entry name" value="NR_LBD_GR"/>
    <property type="match status" value="1"/>
</dbReference>
<dbReference type="FunFam" id="1.10.565.10:FF:000004">
    <property type="entry name" value="Androgen receptor variant"/>
    <property type="match status" value="1"/>
</dbReference>
<dbReference type="FunFam" id="3.30.50.10:FF:000022">
    <property type="entry name" value="glucocorticoid receptor isoform X1"/>
    <property type="match status" value="1"/>
</dbReference>
<dbReference type="Gene3D" id="3.30.50.10">
    <property type="entry name" value="Erythroid Transcription Factor GATA-1, subunit A"/>
    <property type="match status" value="1"/>
</dbReference>
<dbReference type="Gene3D" id="1.10.565.10">
    <property type="entry name" value="Retinoid X Receptor"/>
    <property type="match status" value="1"/>
</dbReference>
<dbReference type="InterPro" id="IPR001409">
    <property type="entry name" value="Glcrtcd_rcpt"/>
</dbReference>
<dbReference type="InterPro" id="IPR035500">
    <property type="entry name" value="NHR-like_dom_sf"/>
</dbReference>
<dbReference type="InterPro" id="IPR000536">
    <property type="entry name" value="Nucl_hrmn_rcpt_lig-bd"/>
</dbReference>
<dbReference type="InterPro" id="IPR050200">
    <property type="entry name" value="Nuclear_hormone_rcpt_NR3"/>
</dbReference>
<dbReference type="InterPro" id="IPR001723">
    <property type="entry name" value="Nuclear_hrmn_rcpt"/>
</dbReference>
<dbReference type="InterPro" id="IPR001628">
    <property type="entry name" value="Znf_hrmn_rcpt"/>
</dbReference>
<dbReference type="InterPro" id="IPR013088">
    <property type="entry name" value="Znf_NHR/GATA"/>
</dbReference>
<dbReference type="PANTHER" id="PTHR48092">
    <property type="entry name" value="KNIRPS-RELATED PROTEIN-RELATED"/>
    <property type="match status" value="1"/>
</dbReference>
<dbReference type="Pfam" id="PF02155">
    <property type="entry name" value="GCR"/>
    <property type="match status" value="1"/>
</dbReference>
<dbReference type="Pfam" id="PF00104">
    <property type="entry name" value="Hormone_recep"/>
    <property type="match status" value="1"/>
</dbReference>
<dbReference type="Pfam" id="PF00105">
    <property type="entry name" value="zf-C4"/>
    <property type="match status" value="1"/>
</dbReference>
<dbReference type="PRINTS" id="PR00528">
    <property type="entry name" value="GLCORTICOIDR"/>
</dbReference>
<dbReference type="PRINTS" id="PR00398">
    <property type="entry name" value="STRDHORMONER"/>
</dbReference>
<dbReference type="PRINTS" id="PR00047">
    <property type="entry name" value="STROIDFINGER"/>
</dbReference>
<dbReference type="SMART" id="SM00430">
    <property type="entry name" value="HOLI"/>
    <property type="match status" value="1"/>
</dbReference>
<dbReference type="SMART" id="SM00399">
    <property type="entry name" value="ZnF_C4"/>
    <property type="match status" value="1"/>
</dbReference>
<dbReference type="SUPFAM" id="SSF57716">
    <property type="entry name" value="Glucocorticoid receptor-like (DNA-binding domain)"/>
    <property type="match status" value="1"/>
</dbReference>
<dbReference type="SUPFAM" id="SSF48508">
    <property type="entry name" value="Nuclear receptor ligand-binding domain"/>
    <property type="match status" value="1"/>
</dbReference>
<dbReference type="PROSITE" id="PS51843">
    <property type="entry name" value="NR_LBD"/>
    <property type="match status" value="1"/>
</dbReference>
<dbReference type="PROSITE" id="PS00031">
    <property type="entry name" value="NUCLEAR_REC_DBD_1"/>
    <property type="match status" value="1"/>
</dbReference>
<dbReference type="PROSITE" id="PS51030">
    <property type="entry name" value="NUCLEAR_REC_DBD_2"/>
    <property type="match status" value="1"/>
</dbReference>
<name>GCR_SAIBB</name>
<sequence>MDSKESLTPGKEENPSSVLTQERGNVMDFCKILRGGATLKVSVSSTSLAAASQSDSKQQRLLVDFPKGSVSNAQQPDLSKAVSLSMGLYMGETETKVMGNDLGFPQQGQISLSSGETDLQLLEESIANLNRSTSVPENPKSSASSSVSAAPKEKEFPKTHSDVSSEQQNLKGQTGSNGGNVKLYTADQSTFDILQDLEFSSGSPGKETNQSPWKSDLLIDENCLLSPLAGEEDSFLLEGNSNEDCKPLILPDTKPKIKDNGDLVLSSSSNVTLPQVKTEKEDFIELCTPGVIKQEKLSTVYCQASFPGANIIGNKMSAISIHGVSTSGGQMYHYDMNTASLSQQQDQKPIFNVIPPIPVGSENWNRCQGSGDDNLTSLGTLNFPGRTVFSNGYSSPSMRPDVSSPPSSSSTATTGPPPKLCLVCSDEASGCHYGVLTCGSCKVFFKRAVEGQHNYLCAGRNDCIIDKIRRKNCPACRYRKCLQAGMNLEARKTKKKIKGIQQATTGVSQETSENPANKTIVPATLPQLTPTLVSLLEVIEPEVLYAGYDSTVPDSTWRIMTTLNMLGGRQVIAAVKWAKAIPGFRNLHLDDQMTLLQYSWMFLMAFALGWRSYRQASSNLLCFAPDLIINEQRMTLPCMYDQCKHMLYVSSELHRLQVSYEEYLCMKTLLLLSSVPKDGLKSQELFDEIRMTYIKELGKAIVKREGNSSQNWQRFYQLTKLLDSMHEVVENLLNYCFQTFLDKTMSIEFPEMLAEIITNQLPKYSNGNIKKLLFHQK</sequence>
<feature type="chain" id="PRO_0000053675" description="Glucocorticoid receptor">
    <location>
        <begin position="1"/>
        <end position="777"/>
    </location>
</feature>
<feature type="domain" description="NR LBD" evidence="6">
    <location>
        <begin position="524"/>
        <end position="758"/>
    </location>
</feature>
<feature type="DNA-binding region" description="Nuclear receptor" evidence="5">
    <location>
        <begin position="421"/>
        <end position="486"/>
    </location>
</feature>
<feature type="zinc finger region" description="NR C4-type" evidence="5">
    <location>
        <begin position="421"/>
        <end position="441"/>
    </location>
</feature>
<feature type="zinc finger region" description="NR C4-type" evidence="5">
    <location>
        <begin position="457"/>
        <end position="481"/>
    </location>
</feature>
<feature type="region of interest" description="Modulating">
    <location>
        <begin position="1"/>
        <end position="420"/>
    </location>
</feature>
<feature type="region of interest" description="Disordered" evidence="7">
    <location>
        <begin position="1"/>
        <end position="22"/>
    </location>
</feature>
<feature type="region of interest" description="Disordered" evidence="7">
    <location>
        <begin position="130"/>
        <end position="182"/>
    </location>
</feature>
<feature type="region of interest" description="Disordered" evidence="7">
    <location>
        <begin position="394"/>
        <end position="415"/>
    </location>
</feature>
<feature type="region of interest" description="Interaction with CLOCK" evidence="1">
    <location>
        <begin position="485"/>
        <end position="777"/>
    </location>
</feature>
<feature type="region of interest" description="Hinge">
    <location>
        <begin position="487"/>
        <end position="523"/>
    </location>
</feature>
<feature type="region of interest" description="Interaction with CRY1" evidence="1">
    <location>
        <begin position="532"/>
        <end position="697"/>
    </location>
</feature>
<feature type="compositionally biased region" description="Basic and acidic residues" evidence="7">
    <location>
        <begin position="1"/>
        <end position="14"/>
    </location>
</feature>
<feature type="compositionally biased region" description="Low complexity" evidence="7">
    <location>
        <begin position="134"/>
        <end position="150"/>
    </location>
</feature>
<feature type="compositionally biased region" description="Basic and acidic residues" evidence="7">
    <location>
        <begin position="151"/>
        <end position="163"/>
    </location>
</feature>
<feature type="compositionally biased region" description="Polar residues" evidence="7">
    <location>
        <begin position="164"/>
        <end position="174"/>
    </location>
</feature>
<feature type="compositionally biased region" description="Low complexity" evidence="7">
    <location>
        <begin position="394"/>
        <end position="414"/>
    </location>
</feature>
<feature type="modified residue" description="Phosphothreonine" evidence="2">
    <location>
        <position position="8"/>
    </location>
</feature>
<feature type="modified residue" description="Omega-N-methylarginine" evidence="4">
    <location>
        <position position="23"/>
    </location>
</feature>
<feature type="modified residue" description="Phosphoserine" evidence="2">
    <location>
        <position position="45"/>
    </location>
</feature>
<feature type="modified residue" description="Phosphoserine" evidence="4">
    <location>
        <position position="113"/>
    </location>
</feature>
<feature type="modified residue" description="Phosphoserine" evidence="2">
    <location>
        <position position="134"/>
    </location>
</feature>
<feature type="modified residue" description="Phosphoserine" evidence="4">
    <location>
        <position position="141"/>
    </location>
</feature>
<feature type="modified residue" description="Phosphoserine" evidence="2">
    <location>
        <position position="203"/>
    </location>
</feature>
<feature type="modified residue" description="Phosphoserine" evidence="2">
    <location>
        <position position="211"/>
    </location>
</feature>
<feature type="modified residue" description="Phosphoserine" evidence="2">
    <location>
        <position position="226"/>
    </location>
</feature>
<feature type="modified residue" description="Phosphoserine" evidence="2">
    <location>
        <position position="267"/>
    </location>
</feature>
<feature type="modified residue" description="Phosphoserine" evidence="2">
    <location>
        <position position="404"/>
    </location>
</feature>
<feature type="modified residue" description="N6-acetyllysine" evidence="2">
    <location>
        <position position="480"/>
    </location>
</feature>
<feature type="modified residue" description="N6-acetyllysine" evidence="2">
    <location>
        <position position="492"/>
    </location>
</feature>
<feature type="modified residue" description="N6-acetyllysine" evidence="2">
    <location>
        <position position="494"/>
    </location>
</feature>
<feature type="modified residue" description="N6-acetyllysine" evidence="2">
    <location>
        <position position="495"/>
    </location>
</feature>
<feature type="cross-link" description="Glycyl lysine isopeptide (Lys-Gly) (interchain with G-Cter in SUMO2)" evidence="2">
    <location>
        <position position="258"/>
    </location>
</feature>
<feature type="cross-link" description="Glycyl lysine isopeptide (Lys-Gly) (interchain with G-Cter in SUMO); alternate" evidence="2">
    <location>
        <position position="277"/>
    </location>
</feature>
<feature type="cross-link" description="Glycyl lysine isopeptide (Lys-Gly) (interchain with G-Cter in SUMO2); alternate" evidence="2">
    <location>
        <position position="277"/>
    </location>
</feature>
<feature type="cross-link" description="Glycyl lysine isopeptide (Lys-Gly) (interchain with G-Cter in SUMO); alternate" evidence="2">
    <location>
        <position position="293"/>
    </location>
</feature>
<feature type="cross-link" description="Glycyl lysine isopeptide (Lys-Gly) (interchain with G-Cter in SUMO2); alternate" evidence="2">
    <location>
        <position position="293"/>
    </location>
</feature>
<feature type="cross-link" description="Glycyl lysine isopeptide (Lys-Gly) (interchain with G-Cter in ubiquitin)" evidence="4">
    <location>
        <position position="419"/>
    </location>
</feature>
<feature type="cross-link" description="Glycyl lysine isopeptide (Lys-Gly) (interchain with G-Cter in SUMO)" evidence="2">
    <location>
        <position position="703"/>
    </location>
</feature>
<comment type="function">
    <text evidence="2 4">Receptor for glucocorticoids (GC). Has a dual mode of action: as a transcription factor that binds to glucocorticoid response elements (GRE), both for nuclear and mitochondrial DNA, and as a modulator of other transcription factors. Affects inflammatory responses, cellular proliferation and differentiation in target tissues. Involved in chromatin remodeling. Plays a role in rapid mRNA degradation by binding to the 5' UTR of target mRNAs and interacting with PNRC2 in a ligand-dependent manner which recruits the RNA helicase UPF1 and the mRNA-decapping enzyme DCP1A, leading to RNA decay. Could act as a coactivator for STAT5-dependent transcription upon growth hormone (GH) stimulation and could reveal an essential role of hepatic GR in the control of body growth. Mediates glucocorticoid-induced apoptosis. Promotes accurate chromosome segregation during mitosis. May act as a tumor suppressor. May play a negative role in adipogenesis through the regulation of lipolytic and antilipogenic gene expression.</text>
</comment>
<comment type="subunit">
    <text evidence="2 3 4">Heteromultimeric cytoplasmic complex with HSP90AA1, HSPA1A/HSPA1B, and FKBP5 or another immunophilin such as PPID, STIP1, or the immunophilin homolog PPP5C. Upon ligand binding FKBP5 dissociates from the complex and FKBP4 takes its place, thereby linking the complex to dynein and mediating transport to the nucleus, where the complex dissociates. Probably forms a complex composed of chaperones HSP90 and HSP70, co-chaperones CDC37, PPP5C, TSC1 and client protein TSC2, CDK4, AKT, RAF1 and NR3C1; this complex does not contain co-chaperones STIP1/HOP and PTGES3/p23. Directly interacts with UNC45A. Binds to DNA as a homodimer, and as heterodimer with NR3C2 or the retinoid X receptor. Binds STAT5A and STAT5B homodimers and heterodimers. Interacts with NRIP1, POU2F1, POU2F2 and TRIM28. Interacts with several coactivator complexes, including the SMARCA4 complex, CREBBP/EP300, TADA2L (Ada complex) and p160 coactivators such as NCOA2 and NCOA6. Interaction with BAG1 inhibits transactivation. Interacts with HEXIM1 and TGFB1I1. Interacts with NCOA1. Interacts with NCOA3, SMARCA4, SMARCC1, SMARCD1, and SMARCE1. Interacts with CLOCK, CRY1 and CRY2 in a ligand-dependent fashion. Interacts with CIART. Interacts with RWDD3. Interacts with UBE2I/UBC9 and this interaction is enhanced in the presence of RWDD3. Interacts with GRIP1. Interacts with NR4A3 (via nuclear receptor DNA-binding domain), represses transcription activity of NR4A3 on the POMC promoter Nur response element (NurRE). Directly interacts with PNRC2 to attract and form a complex with UPF1 and DCP1A; the interaction leads to rapid mRNA degradation. Interacts with GSK3B. Interacts with FNIP1 and FNIP2. Interacts (via C-terminus) with HNRNPU (via C-terminus). Interacts with MCM3AP (By similarity). Interacts (via domain NR LBD) with HSP90AA1 and HSP90AB1 (By similarity). In the absence of hormonal ligand, interacts with TACC1 (By similarity). Interacts (via NR LBD domain) with ZNF764 (via KRAB domain); the interaction regulates transcription factor activity of NR3C1 by directing its actions toward certain biologic pathways (By similarity).</text>
</comment>
<comment type="subcellular location">
    <subcellularLocation>
        <location evidence="2">Cytoplasm</location>
    </subcellularLocation>
    <subcellularLocation>
        <location evidence="2">Nucleus</location>
    </subcellularLocation>
    <subcellularLocation>
        <location evidence="2">Mitochondrion</location>
    </subcellularLocation>
    <subcellularLocation>
        <location evidence="2">Cytoplasm</location>
        <location evidence="2">Cytoskeleton</location>
        <location evidence="2">Spindle</location>
    </subcellularLocation>
    <subcellularLocation>
        <location evidence="2">Cytoplasm</location>
        <location evidence="2">Cytoskeleton</location>
        <location evidence="2">Microtubule organizing center</location>
        <location evidence="2">Centrosome</location>
    </subcellularLocation>
    <subcellularLocation>
        <location evidence="4">Chromosome</location>
    </subcellularLocation>
    <subcellularLocation>
        <location evidence="4">Nucleus</location>
        <location evidence="4">Nucleoplasm</location>
    </subcellularLocation>
    <text evidence="2 4">After ligand activation, translocates from the cytoplasm to the nucleus (By similarity). The hormone-occupied receptor undergoes rapid exchange between chromatin and the nucleoplasmic compartment. In the presence of NR1D1 shows a time-dependent subcellular localization, localizing to the cytoplasm at ZT8 and to the nucleus at ZT20. Lacks this diurnal pattern of localization in the absence of NR1D1, localizing to both nucleus and the cytoplasm at ZT8 and ZT20. Upon dexamethasone binding associates with the glucocorticoid response elements of target genes (By similarity).</text>
</comment>
<comment type="domain">
    <text evidence="2">Composed of three domains: a modulating N-terminal domain, a DNA-binding domain and a C-terminal ligand-binding domain. The ligand-binding domain is required for correct chromosome segregation during mitosis although ligand binding is not required.</text>
</comment>
<comment type="PTM">
    <text evidence="1">Acetylation by CLOCK reduces its binding to glucocorticoid response elements and its transcriptional activity.</text>
</comment>
<comment type="PTM">
    <text evidence="2">Increased proteasome-mediated degradation in response to glucocorticoids.</text>
</comment>
<comment type="PTM">
    <text evidence="2 4">Phosphorylated in the absence of hormone; becomes hyperphosphorylated in the presence of glucocorticoid. The Ser-203, Ser-226 and Ser-404-phosphorylated forms are mainly cytoplasmic, and the Ser-211-phosphorylated form is nuclear. Phosphorylation at Ser-211 increases transcriptional activity. Phosphorylation at Ser-203, Ser-226 and Ser-404 decreases signaling capacity. Phosphorylation at Ser-404 may protect from glucocorticoid-induced apoptosis. Phosphorylation at Ser-203 and Ser-211 is not required in regulation of chromosome segregation. May be dephosphorylated by PPP5C, attenuates NR3C1 action.</text>
</comment>
<comment type="PTM">
    <text evidence="4">Ubiquitinated by UBR5, leading to its degradation: UBR5 specifically recognizes and binds ligand-bound NR3C1 when it is not associated with coactivators (NCOAs) (By similarity). In presence of NCOAs, the UBR5-degron is not accessible, preventing its ubiquitination and degradation (By similarity).</text>
</comment>
<comment type="PTM">
    <text evidence="3">Sumoylation at Lys-277 and Lys-293 negatively regulates its transcriptional activity. Sumoylation at Lys-703 positively regulates its transcriptional activity in the presence of RWDD3. Sumoylation at Lys-277 and Lys-293 is dispensable whereas sumoylation at Lys-703 is critical for the stimulatory effect of RWDD3 on its transcriptional activity. Heat shock increases sumoylation in a RWDD3-dependent manner.</text>
</comment>
<comment type="similarity">
    <text evidence="8">Belongs to the nuclear hormone receptor family. NR3 subfamily.</text>
</comment>
<gene>
    <name type="primary">NR3C1</name>
    <name type="synonym">GRL</name>
</gene>
<evidence type="ECO:0000250" key="1"/>
<evidence type="ECO:0000250" key="2">
    <source>
        <dbReference type="UniProtKB" id="P04150"/>
    </source>
</evidence>
<evidence type="ECO:0000250" key="3">
    <source>
        <dbReference type="UniProtKB" id="P06536"/>
    </source>
</evidence>
<evidence type="ECO:0000250" key="4">
    <source>
        <dbReference type="UniProtKB" id="P06537"/>
    </source>
</evidence>
<evidence type="ECO:0000255" key="5">
    <source>
        <dbReference type="PROSITE-ProRule" id="PRU00407"/>
    </source>
</evidence>
<evidence type="ECO:0000255" key="6">
    <source>
        <dbReference type="PROSITE-ProRule" id="PRU01189"/>
    </source>
</evidence>
<evidence type="ECO:0000256" key="7">
    <source>
        <dbReference type="SAM" id="MobiDB-lite"/>
    </source>
</evidence>
<evidence type="ECO:0000305" key="8"/>